<accession>P0DJ57</accession>
<gene>
    <name type="primary">RPL23A</name>
    <name type="synonym">RPL25</name>
    <name type="ORF">TTHERM_00134940A</name>
</gene>
<reference key="1">
    <citation type="journal article" date="2006" name="PLoS Biol.">
        <title>Macronuclear genome sequence of the ciliate Tetrahymena thermophila, a model eukaryote.</title>
        <authorList>
            <person name="Eisen J.A."/>
            <person name="Coyne R.S."/>
            <person name="Wu M."/>
            <person name="Wu D."/>
            <person name="Thiagarajan M."/>
            <person name="Wortman J.R."/>
            <person name="Badger J.H."/>
            <person name="Ren Q."/>
            <person name="Amedeo P."/>
            <person name="Jones K.M."/>
            <person name="Tallon L.J."/>
            <person name="Delcher A.L."/>
            <person name="Salzberg S.L."/>
            <person name="Silva J.C."/>
            <person name="Haas B.J."/>
            <person name="Majoros W.H."/>
            <person name="Farzad M."/>
            <person name="Carlton J.M."/>
            <person name="Smith R.K. Jr."/>
            <person name="Garg J."/>
            <person name="Pearlman R.E."/>
            <person name="Karrer K.M."/>
            <person name="Sun L."/>
            <person name="Manning G."/>
            <person name="Elde N.C."/>
            <person name="Turkewitz A.P."/>
            <person name="Asai D.J."/>
            <person name="Wilkes D.E."/>
            <person name="Wang Y."/>
            <person name="Cai H."/>
            <person name="Collins K."/>
            <person name="Stewart B.A."/>
            <person name="Lee S.R."/>
            <person name="Wilamowska K."/>
            <person name="Weinberg Z."/>
            <person name="Ruzzo W.L."/>
            <person name="Wloga D."/>
            <person name="Gaertig J."/>
            <person name="Frankel J."/>
            <person name="Tsao C.-C."/>
            <person name="Gorovsky M.A."/>
            <person name="Keeling P.J."/>
            <person name="Waller R.F."/>
            <person name="Patron N.J."/>
            <person name="Cherry J.M."/>
            <person name="Stover N.A."/>
            <person name="Krieger C.J."/>
            <person name="del Toro C."/>
            <person name="Ryder H.F."/>
            <person name="Williamson S.C."/>
            <person name="Barbeau R.A."/>
            <person name="Hamilton E.P."/>
            <person name="Orias E."/>
        </authorList>
    </citation>
    <scope>NUCLEOTIDE SEQUENCE [LARGE SCALE GENOMIC DNA]</scope>
    <source>
        <strain>SB210</strain>
    </source>
</reference>
<reference key="2">
    <citation type="journal article" date="2011" name="Science">
        <title>Crystal structure of the eukaryotic 60S ribosomal subunit in complex with initiation factor 6.</title>
        <authorList>
            <person name="Klinge S."/>
            <person name="Voigts-Hoffmann F."/>
            <person name="Leibundgut M."/>
            <person name="Arpagaus S."/>
            <person name="Ban N."/>
        </authorList>
    </citation>
    <scope>X-RAY CRYSTALLOGRAPHY (3.52 ANGSTROMS) OF 60S RIBOSOME</scope>
</reference>
<sequence length="150" mass="16862">MNKENKTQAVNKAKNTAKVAKKGSSITKHKTYTGVRFFRPKTLQLAKAPKYSRTVRAHLKVSGHLDNHSVVKTPLTTEKAMKKMEDENTMVFYVHNRSTKPQIKSAFEKLYNVKVRSVNTLNTITGNKKAYIRLAADSDSLTLANKIGLI</sequence>
<dbReference type="EMBL" id="GG662639">
    <property type="protein sequence ID" value="EAR99429.1"/>
    <property type="molecule type" value="Genomic_DNA"/>
</dbReference>
<dbReference type="RefSeq" id="XP_001019674.1">
    <property type="nucleotide sequence ID" value="XM_001019674.3"/>
</dbReference>
<dbReference type="PDB" id="4V8P">
    <property type="method" value="X-ray"/>
    <property type="resolution" value="3.52 A"/>
    <property type="chains" value="BR/CR/ER/GR=1-150"/>
</dbReference>
<dbReference type="PDBsum" id="4V8P"/>
<dbReference type="SMR" id="P0DJ57"/>
<dbReference type="FunCoup" id="P0DJ57">
    <property type="interactions" value="379"/>
</dbReference>
<dbReference type="IntAct" id="P0DJ57">
    <property type="interactions" value="1"/>
</dbReference>
<dbReference type="STRING" id="312017.P0DJ57"/>
<dbReference type="EnsemblProtists" id="EAR99429">
    <property type="protein sequence ID" value="EAR99429"/>
    <property type="gene ID" value="TTHERM_00134940"/>
</dbReference>
<dbReference type="KEGG" id="tet:TTHERM_00134940"/>
<dbReference type="eggNOG" id="KOG1751">
    <property type="taxonomic scope" value="Eukaryota"/>
</dbReference>
<dbReference type="HOGENOM" id="CLU_037562_0_1_1"/>
<dbReference type="InParanoid" id="P0DJ57"/>
<dbReference type="OMA" id="RLDHHKV"/>
<dbReference type="OrthoDB" id="1267328at2759"/>
<dbReference type="Proteomes" id="UP000009168">
    <property type="component" value="Unassembled WGS sequence"/>
</dbReference>
<dbReference type="GO" id="GO:1990904">
    <property type="term" value="C:ribonucleoprotein complex"/>
    <property type="evidence" value="ECO:0007669"/>
    <property type="project" value="UniProtKB-KW"/>
</dbReference>
<dbReference type="GO" id="GO:0005840">
    <property type="term" value="C:ribosome"/>
    <property type="evidence" value="ECO:0007669"/>
    <property type="project" value="UniProtKB-KW"/>
</dbReference>
<dbReference type="GO" id="GO:0019843">
    <property type="term" value="F:rRNA binding"/>
    <property type="evidence" value="ECO:0007669"/>
    <property type="project" value="UniProtKB-KW"/>
</dbReference>
<dbReference type="GO" id="GO:0003735">
    <property type="term" value="F:structural constituent of ribosome"/>
    <property type="evidence" value="ECO:0007669"/>
    <property type="project" value="InterPro"/>
</dbReference>
<dbReference type="GO" id="GO:0006412">
    <property type="term" value="P:translation"/>
    <property type="evidence" value="ECO:0007669"/>
    <property type="project" value="InterPro"/>
</dbReference>
<dbReference type="FunFam" id="3.30.70.330:FF:000532">
    <property type="entry name" value="50S ribosomal protein L23"/>
    <property type="match status" value="1"/>
</dbReference>
<dbReference type="Gene3D" id="3.30.70.330">
    <property type="match status" value="1"/>
</dbReference>
<dbReference type="HAMAP" id="MF_01369_A">
    <property type="entry name" value="Ribosomal_uL23_A"/>
    <property type="match status" value="1"/>
</dbReference>
<dbReference type="HAMAP" id="MF_01369_B">
    <property type="entry name" value="Ribosomal_uL23_B"/>
    <property type="match status" value="1"/>
</dbReference>
<dbReference type="InterPro" id="IPR012677">
    <property type="entry name" value="Nucleotide-bd_a/b_plait_sf"/>
</dbReference>
<dbReference type="InterPro" id="IPR013025">
    <property type="entry name" value="Ribosomal_uL23-like"/>
</dbReference>
<dbReference type="InterPro" id="IPR012678">
    <property type="entry name" value="Ribosomal_uL23/eL15/eS24_sf"/>
</dbReference>
<dbReference type="InterPro" id="IPR001014">
    <property type="entry name" value="Ribosomal_uL23_CS"/>
</dbReference>
<dbReference type="InterPro" id="IPR005633">
    <property type="entry name" value="Ribosomal_uL23_N"/>
</dbReference>
<dbReference type="NCBIfam" id="NF011118">
    <property type="entry name" value="PRK14548.1"/>
    <property type="match status" value="1"/>
</dbReference>
<dbReference type="PANTHER" id="PTHR11620">
    <property type="entry name" value="60S RIBOSOMAL PROTEIN L23A"/>
    <property type="match status" value="1"/>
</dbReference>
<dbReference type="Pfam" id="PF00276">
    <property type="entry name" value="Ribosomal_L23"/>
    <property type="match status" value="1"/>
</dbReference>
<dbReference type="Pfam" id="PF03939">
    <property type="entry name" value="Ribosomal_L23eN"/>
    <property type="match status" value="1"/>
</dbReference>
<dbReference type="SUPFAM" id="SSF54189">
    <property type="entry name" value="Ribosomal proteins S24e, L23 and L15e"/>
    <property type="match status" value="1"/>
</dbReference>
<dbReference type="PROSITE" id="PS00050">
    <property type="entry name" value="RIBOSOMAL_L23"/>
    <property type="match status" value="1"/>
</dbReference>
<comment type="similarity">
    <text evidence="2">Belongs to the universal ribosomal protein uL23 family.</text>
</comment>
<name>RL23A_TETTS</name>
<proteinExistence type="evidence at protein level"/>
<keyword id="KW-0002">3D-structure</keyword>
<keyword id="KW-1185">Reference proteome</keyword>
<keyword id="KW-0687">Ribonucleoprotein</keyword>
<keyword id="KW-0689">Ribosomal protein</keyword>
<keyword id="KW-0694">RNA-binding</keyword>
<keyword id="KW-0699">rRNA-binding</keyword>
<protein>
    <recommendedName>
        <fullName evidence="2">Large ribosomal subunit protein uL23</fullName>
    </recommendedName>
    <alternativeName>
        <fullName>60S ribosomal protein L23A</fullName>
    </alternativeName>
</protein>
<evidence type="ECO:0000256" key="1">
    <source>
        <dbReference type="SAM" id="MobiDB-lite"/>
    </source>
</evidence>
<evidence type="ECO:0000305" key="2"/>
<organism>
    <name type="scientific">Tetrahymena thermophila (strain SB210)</name>
    <dbReference type="NCBI Taxonomy" id="312017"/>
    <lineage>
        <taxon>Eukaryota</taxon>
        <taxon>Sar</taxon>
        <taxon>Alveolata</taxon>
        <taxon>Ciliophora</taxon>
        <taxon>Intramacronucleata</taxon>
        <taxon>Oligohymenophorea</taxon>
        <taxon>Hymenostomatida</taxon>
        <taxon>Tetrahymenina</taxon>
        <taxon>Tetrahymenidae</taxon>
        <taxon>Tetrahymena</taxon>
    </lineage>
</organism>
<feature type="chain" id="PRO_0000413509" description="Large ribosomal subunit protein uL23">
    <location>
        <begin position="1"/>
        <end position="150"/>
    </location>
</feature>
<feature type="region of interest" description="Disordered" evidence="1">
    <location>
        <begin position="1"/>
        <end position="24"/>
    </location>
</feature>
<feature type="compositionally biased region" description="Low complexity" evidence="1">
    <location>
        <begin position="7"/>
        <end position="18"/>
    </location>
</feature>